<protein>
    <recommendedName>
        <fullName evidence="1">Small ribosomal subunit protein bS6</fullName>
    </recommendedName>
    <alternativeName>
        <fullName evidence="2">30S ribosomal protein S6</fullName>
    </alternativeName>
</protein>
<accession>Q6NEI3</accession>
<sequence>MRHYEVMIILDPSQDERTVAPSLDKFLEIVRKENGTVEKVDIWGKRRLAYPIAKKEEGIYAVVNLTCESATVLELDRVLNLNDSVMRTKVLRGDK</sequence>
<reference key="1">
    <citation type="journal article" date="2003" name="Nucleic Acids Res.">
        <title>The complete genome sequence and analysis of Corynebacterium diphtheriae NCTC13129.</title>
        <authorList>
            <person name="Cerdeno-Tarraga A.-M."/>
            <person name="Efstratiou A."/>
            <person name="Dover L.G."/>
            <person name="Holden M.T.G."/>
            <person name="Pallen M.J."/>
            <person name="Bentley S.D."/>
            <person name="Besra G.S."/>
            <person name="Churcher C.M."/>
            <person name="James K.D."/>
            <person name="De Zoysa A."/>
            <person name="Chillingworth T."/>
            <person name="Cronin A."/>
            <person name="Dowd L."/>
            <person name="Feltwell T."/>
            <person name="Hamlin N."/>
            <person name="Holroyd S."/>
            <person name="Jagels K."/>
            <person name="Moule S."/>
            <person name="Quail M.A."/>
            <person name="Rabbinowitsch E."/>
            <person name="Rutherford K.M."/>
            <person name="Thomson N.R."/>
            <person name="Unwin L."/>
            <person name="Whitehead S."/>
            <person name="Barrell B.G."/>
            <person name="Parkhill J."/>
        </authorList>
    </citation>
    <scope>NUCLEOTIDE SEQUENCE [LARGE SCALE GENOMIC DNA]</scope>
    <source>
        <strain>ATCC 700971 / NCTC 13129 / Biotype gravis</strain>
    </source>
</reference>
<keyword id="KW-1185">Reference proteome</keyword>
<keyword id="KW-0687">Ribonucleoprotein</keyword>
<keyword id="KW-0689">Ribosomal protein</keyword>
<keyword id="KW-0694">RNA-binding</keyword>
<keyword id="KW-0699">rRNA-binding</keyword>
<dbReference type="EMBL" id="BX248360">
    <property type="protein sequence ID" value="CAE50814.1"/>
    <property type="status" value="ALT_INIT"/>
    <property type="molecule type" value="Genomic_DNA"/>
</dbReference>
<dbReference type="RefSeq" id="WP_003853145.1">
    <property type="nucleotide sequence ID" value="NC_002935.2"/>
</dbReference>
<dbReference type="SMR" id="Q6NEI3"/>
<dbReference type="STRING" id="257309.DIP2291"/>
<dbReference type="GeneID" id="97333255"/>
<dbReference type="KEGG" id="cdi:DIP2291"/>
<dbReference type="HOGENOM" id="CLU_113441_5_3_11"/>
<dbReference type="Proteomes" id="UP000002198">
    <property type="component" value="Chromosome"/>
</dbReference>
<dbReference type="GO" id="GO:0005737">
    <property type="term" value="C:cytoplasm"/>
    <property type="evidence" value="ECO:0007669"/>
    <property type="project" value="UniProtKB-ARBA"/>
</dbReference>
<dbReference type="GO" id="GO:1990904">
    <property type="term" value="C:ribonucleoprotein complex"/>
    <property type="evidence" value="ECO:0007669"/>
    <property type="project" value="UniProtKB-KW"/>
</dbReference>
<dbReference type="GO" id="GO:0005840">
    <property type="term" value="C:ribosome"/>
    <property type="evidence" value="ECO:0007669"/>
    <property type="project" value="UniProtKB-KW"/>
</dbReference>
<dbReference type="GO" id="GO:0070181">
    <property type="term" value="F:small ribosomal subunit rRNA binding"/>
    <property type="evidence" value="ECO:0007669"/>
    <property type="project" value="TreeGrafter"/>
</dbReference>
<dbReference type="GO" id="GO:0003735">
    <property type="term" value="F:structural constituent of ribosome"/>
    <property type="evidence" value="ECO:0007669"/>
    <property type="project" value="InterPro"/>
</dbReference>
<dbReference type="GO" id="GO:0006412">
    <property type="term" value="P:translation"/>
    <property type="evidence" value="ECO:0007669"/>
    <property type="project" value="UniProtKB-UniRule"/>
</dbReference>
<dbReference type="CDD" id="cd00473">
    <property type="entry name" value="bS6"/>
    <property type="match status" value="1"/>
</dbReference>
<dbReference type="FunFam" id="3.30.70.60:FF:000002">
    <property type="entry name" value="30S ribosomal protein S6"/>
    <property type="match status" value="1"/>
</dbReference>
<dbReference type="Gene3D" id="3.30.70.60">
    <property type="match status" value="1"/>
</dbReference>
<dbReference type="HAMAP" id="MF_00360">
    <property type="entry name" value="Ribosomal_bS6"/>
    <property type="match status" value="1"/>
</dbReference>
<dbReference type="InterPro" id="IPR000529">
    <property type="entry name" value="Ribosomal_bS6"/>
</dbReference>
<dbReference type="InterPro" id="IPR020815">
    <property type="entry name" value="Ribosomal_bS6_CS"/>
</dbReference>
<dbReference type="InterPro" id="IPR035980">
    <property type="entry name" value="Ribosomal_bS6_sf"/>
</dbReference>
<dbReference type="InterPro" id="IPR020814">
    <property type="entry name" value="Ribosomal_S6_plastid/chlpt"/>
</dbReference>
<dbReference type="InterPro" id="IPR014717">
    <property type="entry name" value="Transl_elong_EF1B/ribsomal_bS6"/>
</dbReference>
<dbReference type="NCBIfam" id="TIGR00166">
    <property type="entry name" value="S6"/>
    <property type="match status" value="1"/>
</dbReference>
<dbReference type="PANTHER" id="PTHR21011">
    <property type="entry name" value="MITOCHONDRIAL 28S RIBOSOMAL PROTEIN S6"/>
    <property type="match status" value="1"/>
</dbReference>
<dbReference type="PANTHER" id="PTHR21011:SF1">
    <property type="entry name" value="SMALL RIBOSOMAL SUBUNIT PROTEIN BS6M"/>
    <property type="match status" value="1"/>
</dbReference>
<dbReference type="Pfam" id="PF01250">
    <property type="entry name" value="Ribosomal_S6"/>
    <property type="match status" value="1"/>
</dbReference>
<dbReference type="SUPFAM" id="SSF54995">
    <property type="entry name" value="Ribosomal protein S6"/>
    <property type="match status" value="1"/>
</dbReference>
<dbReference type="PROSITE" id="PS01048">
    <property type="entry name" value="RIBOSOMAL_S6"/>
    <property type="match status" value="1"/>
</dbReference>
<organism>
    <name type="scientific">Corynebacterium diphtheriae (strain ATCC 700971 / NCTC 13129 / Biotype gravis)</name>
    <dbReference type="NCBI Taxonomy" id="257309"/>
    <lineage>
        <taxon>Bacteria</taxon>
        <taxon>Bacillati</taxon>
        <taxon>Actinomycetota</taxon>
        <taxon>Actinomycetes</taxon>
        <taxon>Mycobacteriales</taxon>
        <taxon>Corynebacteriaceae</taxon>
        <taxon>Corynebacterium</taxon>
    </lineage>
</organism>
<gene>
    <name evidence="1" type="primary">rpsF</name>
    <name type="ordered locus">DIP2291</name>
</gene>
<proteinExistence type="inferred from homology"/>
<name>RS6_CORDI</name>
<comment type="function">
    <text evidence="1">Binds together with bS18 to 16S ribosomal RNA.</text>
</comment>
<comment type="similarity">
    <text evidence="1">Belongs to the bacterial ribosomal protein bS6 family.</text>
</comment>
<comment type="sequence caution" evidence="2">
    <conflict type="erroneous initiation">
        <sequence resource="EMBL-CDS" id="CAE50814"/>
    </conflict>
</comment>
<feature type="chain" id="PRO_0000176757" description="Small ribosomal subunit protein bS6">
    <location>
        <begin position="1"/>
        <end position="95"/>
    </location>
</feature>
<evidence type="ECO:0000255" key="1">
    <source>
        <dbReference type="HAMAP-Rule" id="MF_00360"/>
    </source>
</evidence>
<evidence type="ECO:0000305" key="2"/>